<reference key="1">
    <citation type="journal article" date="1995" name="Biochim. Biophys. Acta">
        <title>Cloning and expression of the gene of hemocytin, an insect humoral lectin which is homologous with the mammalian von Willebrand factor.</title>
        <authorList>
            <person name="Kotani E."/>
            <person name="Yamakawa M."/>
            <person name="Iwamoto S."/>
            <person name="Tashiro M."/>
            <person name="Mori H."/>
            <person name="Sumida M."/>
            <person name="Matsubara F."/>
            <person name="Taniai K."/>
            <person name="Kadono-Okuda K."/>
            <person name="Kato Y."/>
            <person name="Mori H."/>
        </authorList>
    </citation>
    <scope>NUCLEOTIDE SEQUENCE [MRNA]</scope>
    <source>
        <strain>Fuyou X Tokai</strain>
        <tissue>Hemocyte</tissue>
    </source>
</reference>
<reference key="2">
    <citation type="submission" date="1993-01" db="EMBL/GenBank/DDBJ databases">
        <authorList>
            <person name="Kotani E."/>
            <person name="Iwamoto S."/>
            <person name="Tashiro M."/>
            <person name="Mori H."/>
            <person name="Sumida M."/>
            <person name="Matsubara F."/>
            <person name="Yamakawa M."/>
        </authorList>
    </citation>
    <scope>NUCLEOTIDE SEQUENCE [MRNA] OF 2221-3133</scope>
</reference>
<evidence type="ECO:0000250" key="1"/>
<evidence type="ECO:0000255" key="2"/>
<evidence type="ECO:0000255" key="3">
    <source>
        <dbReference type="PROSITE-ProRule" id="PRU00039"/>
    </source>
</evidence>
<evidence type="ECO:0000255" key="4">
    <source>
        <dbReference type="PROSITE-ProRule" id="PRU00081"/>
    </source>
</evidence>
<evidence type="ECO:0000255" key="5">
    <source>
        <dbReference type="PROSITE-ProRule" id="PRU00580"/>
    </source>
</evidence>
<evidence type="ECO:0000256" key="6">
    <source>
        <dbReference type="SAM" id="MobiDB-lite"/>
    </source>
</evidence>
<organism>
    <name type="scientific">Bombyx mori</name>
    <name type="common">Silk moth</name>
    <dbReference type="NCBI Taxonomy" id="7091"/>
    <lineage>
        <taxon>Eukaryota</taxon>
        <taxon>Metazoa</taxon>
        <taxon>Ecdysozoa</taxon>
        <taxon>Arthropoda</taxon>
        <taxon>Hexapoda</taxon>
        <taxon>Insecta</taxon>
        <taxon>Pterygota</taxon>
        <taxon>Neoptera</taxon>
        <taxon>Endopterygota</taxon>
        <taxon>Lepidoptera</taxon>
        <taxon>Glossata</taxon>
        <taxon>Ditrysia</taxon>
        <taxon>Bombycoidea</taxon>
        <taxon>Bombycidae</taxon>
        <taxon>Bombycinae</taxon>
        <taxon>Bombyx</taxon>
    </lineage>
</organism>
<sequence length="3133" mass="343355">MRGGRDPVPVPVLGDYAMVCAKNGIILQWRYNVKECELSCTGGQQYTVCADSCLRKCSDTALAASGQCKPVCVEGCACSPSQLLDDNGVCVPVAKCPCIHKGLQFNAGYKEIRPGRRERELCTCVGARWDCKPATPEEIQNYPPAEDLRSNSTAQNMEFTTCETSEPLTCKNMHLPPSTQTAECRPGCQCKKGQVLDTASKRCVPATQCPCHHAGRSYPDGHLMQEECNKCECKNGNWSCTQRKCAGVCGAWGDSHVNTFDGTQYDFEGVCTYLLAKGAMDGTDGFDVEIQNVPCGTTGATCSKSVTLKVGGAGNEEIVSLTKNAPIPDISKLKRIKMRKAGAYVFLDVPSLGMSLQWDRGLRVYVKIDTMWQGRVKGLCGNYNGDMRDDFQTPSGGGMSESSALIFADSWKLKPTCPKPQPVIDHCKQRPERKEWAQSVCGALKRYPFSLCAGEVGAGAYVARCERDACDAGADCECACAALAAYAHACAHRGVTFNWRTNDLCPMQCDEVCSNYDSCVSACPVETCDNILYYAETTARCEQDTCVEGCKPKKSCPEGSVYKNDSTTECVPRAKCKPVCMTLDGGREVLEGEIIEEDACHTCRCSKKHKVCTGQPCSTEAPRIQATSSSAEPATERPHEPLKCVTGWTPWINRGPAEIGPDGQSVESEPLPKPNELQIGKPMCKPEMMKKIECRTVNDHKTPKETGLNVECSLENGLVCEEPEKTCPDFEIKVYCECEEPQDTSPPVTVTSEASSEPVSTTLATTTSRCPPGEVYQACAYKCDRLCDHFKKTLIAKGRCISEMCVDGCVDESVASNGCEGSSRWRDERTCVPVKDCTCYNDGQIVKPGGVTESGCIKCQCLDNSLYCDSKDCVSLNIPHQGSTHLPYIVRPVSTTITSTTTTTTTSTTTTTTTPEPTETTTETTVPLIIKSTVSPPPECSPDNYIDLVMGDEPLPDTAFSASSEFSEIFAPHNARLNRGPTNSGAGSWNPKVNNDKQYIQVELPRREPIYGVVLQGSPIFDQYVTSYEIMYGDDGNTFSTVDGPDGKPKIFRGPIDNTHPVKQMISPPIEAKVVRIRPLTWHDEISLRLEIIGCAEPLTTETSEPSPTSESPLQCTEPLGLIGELPLENIQVSSNSEEKDYLSINGNRGWKPLYNTPGWVMFDFTGPRNITGILTKGGNDGWVTSYKVLYTSDFETFNPVIDKDGKEKIFPANFDGIVSVTNEFHPPIRARYLKVLPQKWNKNIELRIEPIGCFEPYPEILRSLPEEEEGREEPQVVRKEYGMSQEREMPNCHICPGVEAKECTCSYPEYFDGENCVPRAECPCVESFMTYPVGSTFRGANCDECVCKLGGTTECKPFKECQCDDESLVPKLSPTTCDCTCEPCTNGTKICKTSKLCLALESWCDGVQDCPDDERDCTTSTARTTTTEPTVVTTVAPTQAATAPPTTTTPKPVVECPKVECPPGYIISYTTGSSSSYSRAFSSDLPPPRPRYSYQRYYRGRSTGGYSGYAKTGYSKGGFSKGGFSKGGYGYPSIPRSNQAFTLDKPALTNKQPTSKEECAQFKCISKLPAFKPGVVPPPVACSVVTCPAGYTLKLDKVPTGYNKCPQYECVPPLERPVFCNMTGRTFNTFDGMEYKYDVCFHMLARDNKFDAWLIIVRKNCRLDGCTNELIVMQDDQLIQVKPNMMVTYNNYEYTIEQTKKICFQKNSFDVDRLGNGISITSRKYNFTVLFNKEGDVKIGVLKKHMGGVDGLCGAYDGSLANERRLPDGRVATSIDEFGRSWAKPGVPADACAPRVASAHKQRRAWDLCNVIAEEPFSQCGKVLNLDKWRHICLEKICECTDLVVNGTKRTEEQCRCLVLQQMAAECLAADAGVDLASWRLMMDCPADCPPPLVHYDCYRKRCEETCAPYPNAARACPAQEGQCSPGCYCPDGKLRKGDQCVLPADCLDCTCTGVGTPAKYTTFEGDDLPFLGNCTYLASRDRNQTGEHKYQVYATNGPCDDNANIVCTKIVHLIYEKNVIHISKDPTTKKLRTVIGKTAVFKYPVKENWGTISLLNGQDVSVTLPDIHVELTVSQLNLEFAVRVPTFLYGNRTEGLCGVCAGYQDFLVTSNGTVTDDFDLYGKSWQASPEKLTELEVPSDEQCDAPPPPAPCTPPPPDNNTCYHLYNADRFGACHALVEPQPYVESCEADECGGHGPCDALQRYAAACAELGLCLPDWRRELCPYPCEEPFVYRACVDCERTCDNYEQLQTSPEKCTNKPVEGCFCPEGKVRVNNTCIEPGKCFPCGVDGHYAGDEWQEDASTLCACARSPHGTALVGCRATSCAPPVCAHGEDLRTAPPPPGQCCPEYDCVAKPEAQCKETKKIVCDYGQVLKQKTNPSGCKEYFCECKPSSECEVIPPESEVEIVEAGIHREIDNSGCCPRVSLVCRPETCPKPPHCPQFQTLASVNITGKCCPEYKCELPKDKCIVTLEWEAAAKGGEKPREKPQTVLKDLEAVWLDGPCRSCECALSGAGPAATCAVSACPAVVSSELFVLEPRPVPFACCPEPVQVACRHQDNVYKVGEKWKSPTDVCETYECAADGDGKLQRLAAVQRCDRHCQPGWKYVPAEADSGQCCGKCEPVACVVDGEEKPIGEKWTSSDFCTNFTCVNLNGTLQVQSSNETCPEISDAERKQFVLKEQKVPGKCCPKIEREACTSGRSDIPGRRELDVDRELVRELPMRAGRGRRPALRGLRAALRDRLPTRLEVLPAPAECCGRCKPSPASWKGGRGPSGRARERPVGESWTSADFCTNYTCADLHGTLQVQSSNETCPEVSEAVKKQFVLKEEKIPGKCCPKVEPVACRDGDKIYQEVQVWTTPDPCTNRTCRREDGQLSVGRTVEHCERQCRRGWTYSPPAADHCCGRCVQSACLVDDQLKEPGSTWSSADNCTTFSCDRSGEEVFVTSATEHCPDVSACDPADIVNTTCCQICNEKPQALSKCVLRASELRHCRSDPHPMGAHGLCVNKFPITGFTEVHGSCDSGTIYNNQTGTHESACECCQAAKYSGVSVRLTCEDGTVRPHRVATPARCHCAACGPGLTKHPKPGHASYTGTKNPVQPERDREYVIPDISSASGEARRNHDSNYITTLIISF</sequence>
<name>HMCT_BOMMO</name>
<dbReference type="EMBL" id="D29738">
    <property type="protein sequence ID" value="BAA06160.1"/>
    <property type="molecule type" value="mRNA"/>
</dbReference>
<dbReference type="EMBL" id="D14035">
    <property type="protein sequence ID" value="BAA03124.1"/>
    <property type="molecule type" value="mRNA"/>
</dbReference>
<dbReference type="PIR" id="S52093">
    <property type="entry name" value="S52093"/>
</dbReference>
<dbReference type="RefSeq" id="NP_001104817.1">
    <property type="nucleotide sequence ID" value="NM_001111347.1"/>
</dbReference>
<dbReference type="SMR" id="P98092"/>
<dbReference type="FunCoup" id="P98092">
    <property type="interactions" value="16"/>
</dbReference>
<dbReference type="STRING" id="7091.P98092"/>
<dbReference type="PaxDb" id="7091-BGIBMGA006692-TA"/>
<dbReference type="EnsemblMetazoa" id="NM_001111347.1">
    <property type="protein sequence ID" value="NP_001104817.1"/>
    <property type="gene ID" value="LOC692743"/>
</dbReference>
<dbReference type="GeneID" id="692743"/>
<dbReference type="KEGG" id="bmor:692743"/>
<dbReference type="eggNOG" id="KOG1216">
    <property type="taxonomic scope" value="Eukaryota"/>
</dbReference>
<dbReference type="HOGENOM" id="CLU_361397_0_0_1"/>
<dbReference type="InParanoid" id="P98092"/>
<dbReference type="OrthoDB" id="544820at7088"/>
<dbReference type="Proteomes" id="UP000005204">
    <property type="component" value="Unassembled WGS sequence"/>
</dbReference>
<dbReference type="GO" id="GO:0031012">
    <property type="term" value="C:extracellular matrix"/>
    <property type="evidence" value="ECO:0007669"/>
    <property type="project" value="TreeGrafter"/>
</dbReference>
<dbReference type="GO" id="GO:0005615">
    <property type="term" value="C:extracellular space"/>
    <property type="evidence" value="ECO:0007669"/>
    <property type="project" value="TreeGrafter"/>
</dbReference>
<dbReference type="GO" id="GO:0030246">
    <property type="term" value="F:carbohydrate binding"/>
    <property type="evidence" value="ECO:0007669"/>
    <property type="project" value="UniProtKB-KW"/>
</dbReference>
<dbReference type="GO" id="GO:0007155">
    <property type="term" value="P:cell adhesion"/>
    <property type="evidence" value="ECO:0007669"/>
    <property type="project" value="UniProtKB-KW"/>
</dbReference>
<dbReference type="CDD" id="cd00057">
    <property type="entry name" value="FA58C"/>
    <property type="match status" value="2"/>
</dbReference>
<dbReference type="CDD" id="cd19941">
    <property type="entry name" value="TIL"/>
    <property type="match status" value="5"/>
</dbReference>
<dbReference type="FunFam" id="2.60.120.260:FF:000016">
    <property type="entry name" value="Contactin-associated protein-like 4 isoform 1"/>
    <property type="match status" value="1"/>
</dbReference>
<dbReference type="Gene3D" id="2.60.120.260">
    <property type="entry name" value="Galactose-binding domain-like"/>
    <property type="match status" value="2"/>
</dbReference>
<dbReference type="Gene3D" id="2.10.25.10">
    <property type="entry name" value="Laminin"/>
    <property type="match status" value="4"/>
</dbReference>
<dbReference type="InterPro" id="IPR006207">
    <property type="entry name" value="Cys_knot_C"/>
</dbReference>
<dbReference type="InterPro" id="IPR000421">
    <property type="entry name" value="FA58C"/>
</dbReference>
<dbReference type="InterPro" id="IPR008979">
    <property type="entry name" value="Galactose-bd-like_sf"/>
</dbReference>
<dbReference type="InterPro" id="IPR012111">
    <property type="entry name" value="Hml"/>
</dbReference>
<dbReference type="InterPro" id="IPR050780">
    <property type="entry name" value="Mucin_vWF_Thrombospondin_sf"/>
</dbReference>
<dbReference type="InterPro" id="IPR036084">
    <property type="entry name" value="Ser_inhib-like_sf"/>
</dbReference>
<dbReference type="InterPro" id="IPR002919">
    <property type="entry name" value="TIL_dom"/>
</dbReference>
<dbReference type="InterPro" id="IPR014853">
    <property type="entry name" value="VWF/SSPO/ZAN-like_Cys-rich_dom"/>
</dbReference>
<dbReference type="InterPro" id="IPR001007">
    <property type="entry name" value="VWF_dom"/>
</dbReference>
<dbReference type="InterPro" id="IPR001846">
    <property type="entry name" value="VWF_type-D"/>
</dbReference>
<dbReference type="PANTHER" id="PTHR11339">
    <property type="entry name" value="EXTRACELLULAR MATRIX GLYCOPROTEIN RELATED"/>
    <property type="match status" value="1"/>
</dbReference>
<dbReference type="PANTHER" id="PTHR11339:SF386">
    <property type="entry name" value="HEMOLECTIN, ISOFORM A"/>
    <property type="match status" value="1"/>
</dbReference>
<dbReference type="Pfam" id="PF08742">
    <property type="entry name" value="C8"/>
    <property type="match status" value="3"/>
</dbReference>
<dbReference type="Pfam" id="PF00754">
    <property type="entry name" value="F5_F8_type_C"/>
    <property type="match status" value="2"/>
</dbReference>
<dbReference type="Pfam" id="PF01826">
    <property type="entry name" value="TIL"/>
    <property type="match status" value="2"/>
</dbReference>
<dbReference type="Pfam" id="PF00094">
    <property type="entry name" value="VWD"/>
    <property type="match status" value="3"/>
</dbReference>
<dbReference type="Pfam" id="PF23244">
    <property type="entry name" value="VWF"/>
    <property type="match status" value="1"/>
</dbReference>
<dbReference type="PIRSF" id="PIRSF036569">
    <property type="entry name" value="Hml"/>
    <property type="match status" value="1"/>
</dbReference>
<dbReference type="SMART" id="SM00832">
    <property type="entry name" value="C8"/>
    <property type="match status" value="3"/>
</dbReference>
<dbReference type="SMART" id="SM00041">
    <property type="entry name" value="CT"/>
    <property type="match status" value="1"/>
</dbReference>
<dbReference type="SMART" id="SM00231">
    <property type="entry name" value="FA58C"/>
    <property type="match status" value="2"/>
</dbReference>
<dbReference type="SMART" id="SM00214">
    <property type="entry name" value="VWC"/>
    <property type="match status" value="5"/>
</dbReference>
<dbReference type="SMART" id="SM00215">
    <property type="entry name" value="VWC_out"/>
    <property type="match status" value="1"/>
</dbReference>
<dbReference type="SMART" id="SM00216">
    <property type="entry name" value="VWD"/>
    <property type="match status" value="3"/>
</dbReference>
<dbReference type="SUPFAM" id="SSF57603">
    <property type="entry name" value="FnI-like domain"/>
    <property type="match status" value="2"/>
</dbReference>
<dbReference type="SUPFAM" id="SSF49785">
    <property type="entry name" value="Galactose-binding domain-like"/>
    <property type="match status" value="2"/>
</dbReference>
<dbReference type="SUPFAM" id="SSF57567">
    <property type="entry name" value="Serine protease inhibitors"/>
    <property type="match status" value="4"/>
</dbReference>
<dbReference type="PROSITE" id="PS01185">
    <property type="entry name" value="CTCK_1"/>
    <property type="match status" value="1"/>
</dbReference>
<dbReference type="PROSITE" id="PS01225">
    <property type="entry name" value="CTCK_2"/>
    <property type="match status" value="1"/>
</dbReference>
<dbReference type="PROSITE" id="PS01285">
    <property type="entry name" value="FA58C_1"/>
    <property type="match status" value="2"/>
</dbReference>
<dbReference type="PROSITE" id="PS01286">
    <property type="entry name" value="FA58C_2"/>
    <property type="match status" value="2"/>
</dbReference>
<dbReference type="PROSITE" id="PS50022">
    <property type="entry name" value="FA58C_3"/>
    <property type="match status" value="2"/>
</dbReference>
<dbReference type="PROSITE" id="PS51233">
    <property type="entry name" value="VWFD"/>
    <property type="match status" value="3"/>
</dbReference>
<proteinExistence type="evidence at transcript level"/>
<feature type="signal peptide" evidence="2">
    <location>
        <begin position="1"/>
        <end status="unknown"/>
    </location>
</feature>
<feature type="chain" id="PRO_0000021445" description="Hemocytin">
    <location>
        <begin status="unknown"/>
        <end position="3133"/>
    </location>
</feature>
<feature type="domain" description="TIL 1">
    <location>
        <begin position="40"/>
        <end position="96"/>
    </location>
</feature>
<feature type="domain" description="TIL 2">
    <location>
        <begin position="153"/>
        <end position="209"/>
    </location>
</feature>
<feature type="domain" description="VWFD 1" evidence="5">
    <location>
        <begin position="247"/>
        <end position="418"/>
    </location>
</feature>
<feature type="domain" description="TIL 3">
    <location>
        <begin position="509"/>
        <end position="576"/>
    </location>
</feature>
<feature type="domain" description="TIL 4">
    <location>
        <begin position="770"/>
        <end position="837"/>
    </location>
</feature>
<feature type="domain" description="F5/8 type C 1" evidence="4">
    <location>
        <begin position="940"/>
        <end position="1095"/>
    </location>
</feature>
<feature type="domain" description="F5/8 type C 2" evidence="4">
    <location>
        <begin position="1116"/>
        <end position="1254"/>
    </location>
</feature>
<feature type="domain" description="VWFD 2" evidence="5">
    <location>
        <begin position="1619"/>
        <end position="1794"/>
    </location>
</feature>
<feature type="domain" description="TIL 5">
    <location>
        <begin position="1890"/>
        <end position="1948"/>
    </location>
</feature>
<feature type="domain" description="VWFD 3" evidence="5">
    <location>
        <begin position="1951"/>
        <end position="2136"/>
    </location>
</feature>
<feature type="domain" description="TIL 6">
    <location>
        <begin position="2229"/>
        <end position="2285"/>
    </location>
</feature>
<feature type="domain" description="VWFC 1">
    <location>
        <begin position="2553"/>
        <end position="2622"/>
    </location>
</feature>
<feature type="domain" description="VWFC 2">
    <location>
        <begin position="2842"/>
        <end position="2907"/>
    </location>
</feature>
<feature type="domain" description="CTCK" evidence="3">
    <location>
        <begin position="2971"/>
        <end position="3076"/>
    </location>
</feature>
<feature type="region of interest" description="Disordered" evidence="6">
    <location>
        <begin position="661"/>
        <end position="680"/>
    </location>
</feature>
<feature type="region of interest" description="Disordered" evidence="6">
    <location>
        <begin position="899"/>
        <end position="924"/>
    </location>
</feature>
<feature type="glycosylation site" description="N-linked (GlcNAc...) asparagine" evidence="2">
    <location>
        <position position="151"/>
    </location>
</feature>
<feature type="glycosylation site" description="N-linked (GlcNAc...) asparagine" evidence="2">
    <location>
        <position position="237"/>
    </location>
</feature>
<feature type="glycosylation site" description="N-linked (GlcNAc...) asparagine" evidence="2">
    <location>
        <position position="564"/>
    </location>
</feature>
<feature type="glycosylation site" description="N-linked (GlcNAc...) asparagine" evidence="2">
    <location>
        <position position="1170"/>
    </location>
</feature>
<feature type="glycosylation site" description="N-linked (GlcNAc...) asparagine" evidence="2">
    <location>
        <position position="1387"/>
    </location>
</feature>
<feature type="glycosylation site" description="N-linked (GlcNAc...) asparagine" evidence="2">
    <location>
        <position position="1622"/>
    </location>
</feature>
<feature type="glycosylation site" description="N-linked (GlcNAc...) asparagine" evidence="2">
    <location>
        <position position="1727"/>
    </location>
</feature>
<feature type="glycosylation site" description="N-linked (GlcNAc...) asparagine" evidence="2">
    <location>
        <position position="1847"/>
    </location>
</feature>
<feature type="glycosylation site" description="N-linked (GlcNAc...) asparagine" evidence="2">
    <location>
        <position position="1975"/>
    </location>
</feature>
<feature type="glycosylation site" description="N-linked (GlcNAc...) asparagine" evidence="2">
    <location>
        <position position="1985"/>
    </location>
</feature>
<feature type="glycosylation site" description="N-linked (GlcNAc...) asparagine" evidence="2">
    <location>
        <position position="2093"/>
    </location>
</feature>
<feature type="glycosylation site" description="N-linked (GlcNAc...) asparagine" evidence="2">
    <location>
        <position position="2113"/>
    </location>
</feature>
<feature type="glycosylation site" description="N-linked (GlcNAc...) asparagine" evidence="2">
    <location>
        <position position="2161"/>
    </location>
</feature>
<feature type="glycosylation site" description="N-linked (GlcNAc...) asparagine" evidence="2">
    <location>
        <position position="2276"/>
    </location>
</feature>
<feature type="glycosylation site" description="N-linked (GlcNAc...) asparagine" evidence="2">
    <location>
        <position position="2451"/>
    </location>
</feature>
<feature type="glycosylation site" description="N-linked (GlcNAc...) asparagine" evidence="2">
    <location>
        <position position="2647"/>
    </location>
</feature>
<feature type="glycosylation site" description="N-linked (GlcNAc...) asparagine" evidence="2">
    <location>
        <position position="2654"/>
    </location>
</feature>
<feature type="glycosylation site" description="N-linked (GlcNAc...) asparagine" evidence="2">
    <location>
        <position position="2663"/>
    </location>
</feature>
<feature type="glycosylation site" description="N-linked (GlcNAc...) asparagine" evidence="2">
    <location>
        <position position="2794"/>
    </location>
</feature>
<feature type="glycosylation site" description="N-linked (GlcNAc...) asparagine" evidence="2">
    <location>
        <position position="2810"/>
    </location>
</feature>
<feature type="glycosylation site" description="N-linked (GlcNAc...) asparagine" evidence="2">
    <location>
        <position position="2865"/>
    </location>
</feature>
<feature type="glycosylation site" description="N-linked (GlcNAc...) asparagine" evidence="2">
    <location>
        <position position="2929"/>
    </location>
</feature>
<feature type="glycosylation site" description="N-linked (GlcNAc...) asparagine" evidence="2">
    <location>
        <position position="2964"/>
    </location>
</feature>
<feature type="glycosylation site" description="N-linked (GlcNAc...) asparagine" evidence="2">
    <location>
        <position position="3028"/>
    </location>
</feature>
<feature type="disulfide bond" evidence="5">
    <location>
        <begin position="249"/>
        <end position="380"/>
    </location>
</feature>
<feature type="disulfide bond" evidence="5">
    <location>
        <begin position="271"/>
        <end position="417"/>
    </location>
</feature>
<feature type="disulfide bond" evidence="5">
    <location>
        <begin position="295"/>
        <end position="302"/>
    </location>
</feature>
<feature type="disulfide bond" evidence="1">
    <location>
        <begin position="940"/>
        <end position="1095"/>
    </location>
</feature>
<feature type="disulfide bond" evidence="1">
    <location>
        <begin position="1116"/>
        <end position="1254"/>
    </location>
</feature>
<feature type="disulfide bond" evidence="5">
    <location>
        <begin position="1621"/>
        <end position="1754"/>
    </location>
</feature>
<feature type="disulfide bond" evidence="5">
    <location>
        <begin position="1641"/>
        <end position="1793"/>
    </location>
</feature>
<feature type="disulfide bond" evidence="5">
    <location>
        <begin position="1953"/>
        <end position="2099"/>
    </location>
</feature>
<feature type="disulfide bond" evidence="5">
    <location>
        <begin position="2001"/>
        <end position="2009"/>
    </location>
</feature>
<feature type="disulfide bond" evidence="1">
    <location>
        <begin position="2971"/>
        <end position="3040"/>
    </location>
</feature>
<feature type="disulfide bond" evidence="1">
    <location>
        <begin position="2991"/>
        <end position="3054"/>
    </location>
</feature>
<feature type="disulfide bond" evidence="1">
    <location>
        <begin position="3004"/>
        <end position="3070"/>
    </location>
</feature>
<feature type="disulfide bond" evidence="1">
    <location>
        <begin position="3020"/>
        <end position="3072"/>
    </location>
</feature>
<feature type="disulfide bond" evidence="1">
    <location>
        <begin status="unknown"/>
        <end position="3075"/>
    </location>
</feature>
<feature type="sequence variant">
    <original>R</original>
    <variation>G</variation>
    <location>
        <position position="1288"/>
    </location>
</feature>
<feature type="sequence variant">
    <original>T</original>
    <variation>S</variation>
    <location>
        <position position="1305"/>
    </location>
</feature>
<comment type="function">
    <text>Adhesive protein and relates to hemostasis or encapsulation of foreign substances for self-defense.</text>
</comment>
<comment type="developmental stage">
    <text>Expressed in hemocytes during larval-pupal metamorphosis.</text>
</comment>
<comment type="induction">
    <text>Hemagglutination activity is increased by bacterial or viral infection and inhibited by D-mannose, N-acetyl-D-galactosamine and D-maltose.</text>
</comment>
<comment type="PTM">
    <text>May be converted into the 260 kDa mature hemocytin by proteolysis.</text>
</comment>
<accession>P98092</accession>
<keyword id="KW-0130">Cell adhesion</keyword>
<keyword id="KW-1015">Disulfide bond</keyword>
<keyword id="KW-0325">Glycoprotein</keyword>
<keyword id="KW-0430">Lectin</keyword>
<keyword id="KW-1185">Reference proteome</keyword>
<keyword id="KW-0677">Repeat</keyword>
<keyword id="KW-0732">Signal</keyword>
<protein>
    <recommendedName>
        <fullName>Hemocytin</fullName>
    </recommendedName>
    <alternativeName>
        <fullName>Humoral lectin</fullName>
    </alternativeName>
</protein>